<protein>
    <recommendedName>
        <fullName>Fluoroquinolones export permease protein MT2761</fullName>
    </recommendedName>
</protein>
<sequence>MTRLVPALRLELTLQVRQKFLHAAVFSGLIWLAVLLPMPVSLRPVAEPYVLVGDIAIIGFFFVGGTVFFEKQERTIGAIVSTPLRFWEYLAAKLTVLLAISLFVAVVVATIVHGLGYHLLPLVAGIVLGTLLMLLVGFSSSLPFASVTDWFLAAVIPLAIMLAPPVVHYSGLWPNPVLYLIPTQGPLLLLGAAFDQVSLAPWQVGYAVVYPIVCAAGLCRAAKALFGRYVVQRSGVL</sequence>
<evidence type="ECO:0000250" key="1"/>
<evidence type="ECO:0000255" key="2"/>
<evidence type="ECO:0000305" key="3"/>
<comment type="function">
    <text evidence="1">Part of the ABC transporter complex involved in fluoroquinolones export. Probably responsible for the translocation of the substrate across the membrane (By similarity).</text>
</comment>
<comment type="subunit">
    <text evidence="1">The complex is composed of 2 ATP-binding proteins and 2 transmembrane proteins.</text>
</comment>
<comment type="subcellular location">
    <subcellularLocation>
        <location evidence="3">Cell membrane</location>
        <topology evidence="3">Multi-pass membrane protein</topology>
    </subcellularLocation>
</comment>
<feature type="chain" id="PRO_0000427861" description="Fluoroquinolones export permease protein MT2761">
    <location>
        <begin position="1"/>
        <end position="237"/>
    </location>
</feature>
<feature type="transmembrane region" description="Helical" evidence="2">
    <location>
        <begin position="20"/>
        <end position="40"/>
    </location>
</feature>
<feature type="transmembrane region" description="Helical" evidence="2">
    <location>
        <begin position="49"/>
        <end position="69"/>
    </location>
</feature>
<feature type="transmembrane region" description="Helical" evidence="2">
    <location>
        <begin position="96"/>
        <end position="116"/>
    </location>
</feature>
<feature type="transmembrane region" description="Helical" evidence="2">
    <location>
        <begin position="119"/>
        <end position="139"/>
    </location>
</feature>
<feature type="transmembrane region" description="Helical" evidence="2">
    <location>
        <begin position="147"/>
        <end position="167"/>
    </location>
</feature>
<feature type="transmembrane region" description="Helical" evidence="2">
    <location>
        <begin position="199"/>
        <end position="219"/>
    </location>
</feature>
<reference key="1">
    <citation type="journal article" date="2002" name="J. Bacteriol.">
        <title>Whole-genome comparison of Mycobacterium tuberculosis clinical and laboratory strains.</title>
        <authorList>
            <person name="Fleischmann R.D."/>
            <person name="Alland D."/>
            <person name="Eisen J.A."/>
            <person name="Carpenter L."/>
            <person name="White O."/>
            <person name="Peterson J.D."/>
            <person name="DeBoy R.T."/>
            <person name="Dodson R.J."/>
            <person name="Gwinn M.L."/>
            <person name="Haft D.H."/>
            <person name="Hickey E.K."/>
            <person name="Kolonay J.F."/>
            <person name="Nelson W.C."/>
            <person name="Umayam L.A."/>
            <person name="Ermolaeva M.D."/>
            <person name="Salzberg S.L."/>
            <person name="Delcher A."/>
            <person name="Utterback T.R."/>
            <person name="Weidman J.F."/>
            <person name="Khouri H.M."/>
            <person name="Gill J."/>
            <person name="Mikula A."/>
            <person name="Bishai W."/>
            <person name="Jacobs W.R. Jr."/>
            <person name="Venter J.C."/>
            <person name="Fraser C.M."/>
        </authorList>
    </citation>
    <scope>NUCLEOTIDE SEQUENCE [LARGE SCALE GENOMIC DNA]</scope>
    <source>
        <strain>CDC 1551 / Oshkosh</strain>
    </source>
</reference>
<gene>
    <name type="ordered locus">MT2761</name>
</gene>
<organism>
    <name type="scientific">Mycobacterium tuberculosis (strain CDC 1551 / Oshkosh)</name>
    <dbReference type="NCBI Taxonomy" id="83331"/>
    <lineage>
        <taxon>Bacteria</taxon>
        <taxon>Bacillati</taxon>
        <taxon>Actinomycetota</taxon>
        <taxon>Actinomycetes</taxon>
        <taxon>Mycobacteriales</taxon>
        <taxon>Mycobacteriaceae</taxon>
        <taxon>Mycobacterium</taxon>
        <taxon>Mycobacterium tuberculosis complex</taxon>
    </lineage>
</organism>
<proteinExistence type="inferred from homology"/>
<accession>P9WJB0</accession>
<accession>L0TAC5</accession>
<accession>O07189</accession>
<accession>Q7D6S0</accession>
<keyword id="KW-0046">Antibiotic resistance</keyword>
<keyword id="KW-1003">Cell membrane</keyword>
<keyword id="KW-0472">Membrane</keyword>
<keyword id="KW-1185">Reference proteome</keyword>
<keyword id="KW-0812">Transmembrane</keyword>
<keyword id="KW-1133">Transmembrane helix</keyword>
<keyword id="KW-0813">Transport</keyword>
<name>FLQE3_MYCTO</name>
<dbReference type="EMBL" id="AE000516">
    <property type="protein sequence ID" value="AAK47076.1"/>
    <property type="molecule type" value="Genomic_DNA"/>
</dbReference>
<dbReference type="PIR" id="B70529">
    <property type="entry name" value="B70529"/>
</dbReference>
<dbReference type="RefSeq" id="WP_003413912.1">
    <property type="nucleotide sequence ID" value="NZ_KK341227.1"/>
</dbReference>
<dbReference type="SMR" id="P9WJB0"/>
<dbReference type="KEGG" id="mtc:MT2761"/>
<dbReference type="PATRIC" id="fig|83331.31.peg.2973"/>
<dbReference type="HOGENOM" id="CLU_099729_0_0_11"/>
<dbReference type="Proteomes" id="UP000001020">
    <property type="component" value="Chromosome"/>
</dbReference>
<dbReference type="GO" id="GO:0005886">
    <property type="term" value="C:plasma membrane"/>
    <property type="evidence" value="ECO:0007669"/>
    <property type="project" value="UniProtKB-SubCell"/>
</dbReference>
<dbReference type="GO" id="GO:0046677">
    <property type="term" value="P:response to antibiotic"/>
    <property type="evidence" value="ECO:0007669"/>
    <property type="project" value="UniProtKB-KW"/>
</dbReference>
<dbReference type="InterPro" id="IPR056926">
    <property type="entry name" value="FLQE3_permease"/>
</dbReference>
<dbReference type="Pfam" id="PF24686">
    <property type="entry name" value="FLQE3_permease"/>
    <property type="match status" value="1"/>
</dbReference>